<protein>
    <recommendedName>
        <fullName evidence="1">Putative multidrug resistance protein MdtD</fullName>
    </recommendedName>
</protein>
<name>MDTD_ECO57</name>
<dbReference type="EMBL" id="AE005174">
    <property type="protein sequence ID" value="AAG57140.1"/>
    <property type="molecule type" value="Genomic_DNA"/>
</dbReference>
<dbReference type="EMBL" id="BA000007">
    <property type="protein sequence ID" value="BAB36308.1"/>
    <property type="molecule type" value="Genomic_DNA"/>
</dbReference>
<dbReference type="PIR" id="E90989">
    <property type="entry name" value="E90989"/>
</dbReference>
<dbReference type="PIR" id="H85834">
    <property type="entry name" value="H85834"/>
</dbReference>
<dbReference type="RefSeq" id="WP_000130888.1">
    <property type="nucleotide sequence ID" value="NZ_VOAI01000013.1"/>
</dbReference>
<dbReference type="SMR" id="Q8X7I3"/>
<dbReference type="STRING" id="155864.Z3246"/>
<dbReference type="KEGG" id="ece:Z3246"/>
<dbReference type="KEGG" id="ecs:ECs_2885"/>
<dbReference type="PATRIC" id="fig|386585.9.peg.3017"/>
<dbReference type="eggNOG" id="COG2814">
    <property type="taxonomic scope" value="Bacteria"/>
</dbReference>
<dbReference type="HOGENOM" id="CLU_000960_28_0_6"/>
<dbReference type="OMA" id="GCTMMPL"/>
<dbReference type="Proteomes" id="UP000000558">
    <property type="component" value="Chromosome"/>
</dbReference>
<dbReference type="Proteomes" id="UP000002519">
    <property type="component" value="Chromosome"/>
</dbReference>
<dbReference type="GO" id="GO:0005886">
    <property type="term" value="C:plasma membrane"/>
    <property type="evidence" value="ECO:0007669"/>
    <property type="project" value="UniProtKB-SubCell"/>
</dbReference>
<dbReference type="GO" id="GO:0022857">
    <property type="term" value="F:transmembrane transporter activity"/>
    <property type="evidence" value="ECO:0007669"/>
    <property type="project" value="UniProtKB-UniRule"/>
</dbReference>
<dbReference type="CDD" id="cd17503">
    <property type="entry name" value="MFS_LmrB_MDR_like"/>
    <property type="match status" value="1"/>
</dbReference>
<dbReference type="FunFam" id="1.20.1250.20:FF:000021">
    <property type="entry name" value="Putative multidrug resistance protein MdtD"/>
    <property type="match status" value="1"/>
</dbReference>
<dbReference type="FunFam" id="1.20.1720.10:FF:000001">
    <property type="entry name" value="Putative multidrug resistance protein MdtD"/>
    <property type="match status" value="1"/>
</dbReference>
<dbReference type="Gene3D" id="1.20.1250.20">
    <property type="entry name" value="MFS general substrate transporter like domains"/>
    <property type="match status" value="1"/>
</dbReference>
<dbReference type="Gene3D" id="1.20.1720.10">
    <property type="entry name" value="Multidrug resistance protein D"/>
    <property type="match status" value="1"/>
</dbReference>
<dbReference type="HAMAP" id="MF_01577">
    <property type="entry name" value="MFS_MdtD"/>
    <property type="match status" value="1"/>
</dbReference>
<dbReference type="InterPro" id="IPR004638">
    <property type="entry name" value="EmrB-like"/>
</dbReference>
<dbReference type="InterPro" id="IPR011701">
    <property type="entry name" value="MFS"/>
</dbReference>
<dbReference type="InterPro" id="IPR020846">
    <property type="entry name" value="MFS_dom"/>
</dbReference>
<dbReference type="InterPro" id="IPR036259">
    <property type="entry name" value="MFS_trans_sf"/>
</dbReference>
<dbReference type="InterPro" id="IPR023721">
    <property type="entry name" value="Multi-R_MdtD"/>
</dbReference>
<dbReference type="NCBIfam" id="TIGR00711">
    <property type="entry name" value="efflux_EmrB"/>
    <property type="match status" value="1"/>
</dbReference>
<dbReference type="NCBIfam" id="NF007799">
    <property type="entry name" value="PRK10504.1"/>
    <property type="match status" value="1"/>
</dbReference>
<dbReference type="PANTHER" id="PTHR42718:SF46">
    <property type="entry name" value="BLR6921 PROTEIN"/>
    <property type="match status" value="1"/>
</dbReference>
<dbReference type="PANTHER" id="PTHR42718">
    <property type="entry name" value="MAJOR FACILITATOR SUPERFAMILY MULTIDRUG TRANSPORTER MFSC"/>
    <property type="match status" value="1"/>
</dbReference>
<dbReference type="Pfam" id="PF07690">
    <property type="entry name" value="MFS_1"/>
    <property type="match status" value="1"/>
</dbReference>
<dbReference type="PRINTS" id="PR01036">
    <property type="entry name" value="TCRTETB"/>
</dbReference>
<dbReference type="SUPFAM" id="SSF103473">
    <property type="entry name" value="MFS general substrate transporter"/>
    <property type="match status" value="1"/>
</dbReference>
<dbReference type="PROSITE" id="PS50850">
    <property type="entry name" value="MFS"/>
    <property type="match status" value="1"/>
</dbReference>
<gene>
    <name evidence="1" type="primary">mdtD</name>
    <name type="ordered locus">Z3246</name>
    <name type="ordered locus">ECs2885</name>
</gene>
<keyword id="KW-0997">Cell inner membrane</keyword>
<keyword id="KW-1003">Cell membrane</keyword>
<keyword id="KW-0472">Membrane</keyword>
<keyword id="KW-1185">Reference proteome</keyword>
<keyword id="KW-0812">Transmembrane</keyword>
<keyword id="KW-1133">Transmembrane helix</keyword>
<keyword id="KW-0813">Transport</keyword>
<proteinExistence type="inferred from homology"/>
<evidence type="ECO:0000255" key="1">
    <source>
        <dbReference type="HAMAP-Rule" id="MF_01577"/>
    </source>
</evidence>
<organism>
    <name type="scientific">Escherichia coli O157:H7</name>
    <dbReference type="NCBI Taxonomy" id="83334"/>
    <lineage>
        <taxon>Bacteria</taxon>
        <taxon>Pseudomonadati</taxon>
        <taxon>Pseudomonadota</taxon>
        <taxon>Gammaproteobacteria</taxon>
        <taxon>Enterobacterales</taxon>
        <taxon>Enterobacteriaceae</taxon>
        <taxon>Escherichia</taxon>
    </lineage>
</organism>
<sequence length="471" mass="50983">MTDLPDSTRWQLWIVAFGFFMQSLDTTIVNTALPSMAQSLGESPLHMHMVIVSYVLTVAVMLPASGWLADKVGVRNIFFTAIVLFTLGSLFCALSGTLNELLLARALQGVGGAMMVPVGRLTVMKIVPREQYMAAMTFVTLPGQVGPLLGPALGGLLVEYASWHWIFLINIPVGIIGAIATLMLMPNYTMQTRRFDLSGFLLLAVGMAVLTLALDGSKGTGLSPLAITGLVAVGVVALVLYLLHARNNNRALFSLKLFRTRTFSLGLAGSFAGRIGSGMLPFMTPVFLQIGLGFSPFHAGLMMIPMVLGSMGMKRIVVQVVNRFGYRRVLVATTLGLSLVTLLFMTTALLGWYYVLPFVLFLQGMVNSTRFSSMNTLTLKDLPDNLASSGNSLLSMIMQLSMSIGVTIAGLLLGLFGSQHVSVDSSTTQTVFMYTWLSMAFIIALPAFIFARVPNDTHQNVAISRRKRSAQ</sequence>
<reference key="1">
    <citation type="journal article" date="2001" name="Nature">
        <title>Genome sequence of enterohaemorrhagic Escherichia coli O157:H7.</title>
        <authorList>
            <person name="Perna N.T."/>
            <person name="Plunkett G. III"/>
            <person name="Burland V."/>
            <person name="Mau B."/>
            <person name="Glasner J.D."/>
            <person name="Rose D.J."/>
            <person name="Mayhew G.F."/>
            <person name="Evans P.S."/>
            <person name="Gregor J."/>
            <person name="Kirkpatrick H.A."/>
            <person name="Posfai G."/>
            <person name="Hackett J."/>
            <person name="Klink S."/>
            <person name="Boutin A."/>
            <person name="Shao Y."/>
            <person name="Miller L."/>
            <person name="Grotbeck E.J."/>
            <person name="Davis N.W."/>
            <person name="Lim A."/>
            <person name="Dimalanta E.T."/>
            <person name="Potamousis K."/>
            <person name="Apodaca J."/>
            <person name="Anantharaman T.S."/>
            <person name="Lin J."/>
            <person name="Yen G."/>
            <person name="Schwartz D.C."/>
            <person name="Welch R.A."/>
            <person name="Blattner F.R."/>
        </authorList>
    </citation>
    <scope>NUCLEOTIDE SEQUENCE [LARGE SCALE GENOMIC DNA]</scope>
    <source>
        <strain>O157:H7 / EDL933 / ATCC 700927 / EHEC</strain>
    </source>
</reference>
<reference key="2">
    <citation type="journal article" date="2001" name="DNA Res.">
        <title>Complete genome sequence of enterohemorrhagic Escherichia coli O157:H7 and genomic comparison with a laboratory strain K-12.</title>
        <authorList>
            <person name="Hayashi T."/>
            <person name="Makino K."/>
            <person name="Ohnishi M."/>
            <person name="Kurokawa K."/>
            <person name="Ishii K."/>
            <person name="Yokoyama K."/>
            <person name="Han C.-G."/>
            <person name="Ohtsubo E."/>
            <person name="Nakayama K."/>
            <person name="Murata T."/>
            <person name="Tanaka M."/>
            <person name="Tobe T."/>
            <person name="Iida T."/>
            <person name="Takami H."/>
            <person name="Honda T."/>
            <person name="Sasakawa C."/>
            <person name="Ogasawara N."/>
            <person name="Yasunaga T."/>
            <person name="Kuhara S."/>
            <person name="Shiba T."/>
            <person name="Hattori M."/>
            <person name="Shinagawa H."/>
        </authorList>
    </citation>
    <scope>NUCLEOTIDE SEQUENCE [LARGE SCALE GENOMIC DNA]</scope>
    <source>
        <strain>O157:H7 / Sakai / RIMD 0509952 / EHEC</strain>
    </source>
</reference>
<accession>Q8X7I3</accession>
<accession>Q7ACM0</accession>
<comment type="subcellular location">
    <subcellularLocation>
        <location evidence="1">Cell inner membrane</location>
        <topology evidence="1">Multi-pass membrane protein</topology>
    </subcellularLocation>
</comment>
<comment type="similarity">
    <text evidence="1">Belongs to the major facilitator superfamily. TCR/Tet family.</text>
</comment>
<feature type="chain" id="PRO_0000268591" description="Putative multidrug resistance protein MdtD">
    <location>
        <begin position="1"/>
        <end position="471"/>
    </location>
</feature>
<feature type="topological domain" description="Periplasmic" evidence="1">
    <location>
        <begin position="1"/>
        <end position="11"/>
    </location>
</feature>
<feature type="transmembrane region" description="Helical" evidence="1">
    <location>
        <begin position="12"/>
        <end position="32"/>
    </location>
</feature>
<feature type="topological domain" description="Cytoplasmic" evidence="1">
    <location>
        <begin position="33"/>
        <end position="48"/>
    </location>
</feature>
<feature type="transmembrane region" description="Helical" evidence="1">
    <location>
        <begin position="49"/>
        <end position="69"/>
    </location>
</feature>
<feature type="topological domain" description="Periplasmic" evidence="1">
    <location>
        <begin position="70"/>
        <end position="76"/>
    </location>
</feature>
<feature type="transmembrane region" description="Helical" evidence="1">
    <location>
        <begin position="77"/>
        <end position="97"/>
    </location>
</feature>
<feature type="topological domain" description="Cytoplasmic" evidence="1">
    <location>
        <begin position="98"/>
        <end position="101"/>
    </location>
</feature>
<feature type="transmembrane region" description="Helical" evidence="1">
    <location>
        <begin position="102"/>
        <end position="124"/>
    </location>
</feature>
<feature type="topological domain" description="Periplasmic" evidence="1">
    <location>
        <begin position="125"/>
        <end position="137"/>
    </location>
</feature>
<feature type="transmembrane region" description="Helical" evidence="1">
    <location>
        <begin position="138"/>
        <end position="158"/>
    </location>
</feature>
<feature type="topological domain" description="Cytoplasmic" evidence="1">
    <location>
        <begin position="159"/>
        <end position="164"/>
    </location>
</feature>
<feature type="transmembrane region" description="Helical" evidence="1">
    <location>
        <begin position="165"/>
        <end position="185"/>
    </location>
</feature>
<feature type="topological domain" description="Periplasmic" evidence="1">
    <location>
        <begin position="186"/>
        <end position="196"/>
    </location>
</feature>
<feature type="transmembrane region" description="Helical" evidence="1">
    <location>
        <begin position="197"/>
        <end position="217"/>
    </location>
</feature>
<feature type="topological domain" description="Cytoplasmic" evidence="1">
    <location>
        <begin position="218"/>
        <end position="224"/>
    </location>
</feature>
<feature type="transmembrane region" description="Helical" evidence="1">
    <location>
        <begin position="225"/>
        <end position="245"/>
    </location>
</feature>
<feature type="topological domain" description="Periplasmic" evidence="1">
    <location>
        <begin position="246"/>
        <end position="262"/>
    </location>
</feature>
<feature type="transmembrane region" description="Helical" evidence="1">
    <location>
        <begin position="263"/>
        <end position="283"/>
    </location>
</feature>
<feature type="topological domain" description="Cytoplasmic" evidence="1">
    <location>
        <begin position="284"/>
        <end position="285"/>
    </location>
</feature>
<feature type="transmembrane region" description="Helical" evidence="1">
    <location>
        <begin position="286"/>
        <end position="306"/>
    </location>
</feature>
<feature type="topological domain" description="Periplasmic" evidence="1">
    <location>
        <begin position="307"/>
        <end position="341"/>
    </location>
</feature>
<feature type="transmembrane region" description="Helical" evidence="1">
    <location>
        <begin position="342"/>
        <end position="362"/>
    </location>
</feature>
<feature type="topological domain" description="Cytoplasmic" evidence="1">
    <location>
        <begin position="363"/>
        <end position="395"/>
    </location>
</feature>
<feature type="transmembrane region" description="Helical" evidence="1">
    <location>
        <begin position="396"/>
        <end position="416"/>
    </location>
</feature>
<feature type="topological domain" description="Periplasmic" evidence="1">
    <location>
        <begin position="417"/>
        <end position="430"/>
    </location>
</feature>
<feature type="transmembrane region" description="Helical" evidence="1">
    <location>
        <begin position="431"/>
        <end position="451"/>
    </location>
</feature>
<feature type="topological domain" description="Cytoplasmic" evidence="1">
    <location>
        <begin position="452"/>
        <end position="471"/>
    </location>
</feature>